<organism>
    <name type="scientific">Mus musculus</name>
    <name type="common">Mouse</name>
    <dbReference type="NCBI Taxonomy" id="10090"/>
    <lineage>
        <taxon>Eukaryota</taxon>
        <taxon>Metazoa</taxon>
        <taxon>Chordata</taxon>
        <taxon>Craniata</taxon>
        <taxon>Vertebrata</taxon>
        <taxon>Euteleostomi</taxon>
        <taxon>Mammalia</taxon>
        <taxon>Eutheria</taxon>
        <taxon>Euarchontoglires</taxon>
        <taxon>Glires</taxon>
        <taxon>Rodentia</taxon>
        <taxon>Myomorpha</taxon>
        <taxon>Muroidea</taxon>
        <taxon>Muridae</taxon>
        <taxon>Murinae</taxon>
        <taxon>Mus</taxon>
        <taxon>Mus</taxon>
    </lineage>
</organism>
<keyword id="KW-1185">Reference proteome</keyword>
<keyword id="KW-0964">Secreted</keyword>
<keyword id="KW-0732">Signal</keyword>
<dbReference type="EMBL" id="AY325122">
    <property type="protein sequence ID" value="AAP92414.1"/>
    <property type="molecule type" value="mRNA"/>
</dbReference>
<dbReference type="EMBL" id="BC118531">
    <property type="protein sequence ID" value="AAI18532.1"/>
    <property type="molecule type" value="mRNA"/>
</dbReference>
<dbReference type="CCDS" id="CCDS51032.1"/>
<dbReference type="RefSeq" id="NP_899047.1">
    <property type="nucleotide sequence ID" value="NM_183224.3"/>
</dbReference>
<dbReference type="RefSeq" id="XP_017175115.1">
    <property type="nucleotide sequence ID" value="XM_017319626.3"/>
</dbReference>
<dbReference type="RefSeq" id="XP_036019033.1">
    <property type="nucleotide sequence ID" value="XM_036163140.1"/>
</dbReference>
<dbReference type="FunCoup" id="Q7TPG6">
    <property type="interactions" value="342"/>
</dbReference>
<dbReference type="STRING" id="10090.ENSMUSP00000123514"/>
<dbReference type="iPTMnet" id="Q7TPG6"/>
<dbReference type="PhosphoSitePlus" id="Q7TPG6"/>
<dbReference type="PaxDb" id="10090-ENSMUSP00000123514"/>
<dbReference type="ProteomicsDB" id="275724"/>
<dbReference type="Antibodypedia" id="33837">
    <property type="antibodies" value="103 antibodies from 17 providers"/>
</dbReference>
<dbReference type="Ensembl" id="ENSMUST00000139783.2">
    <property type="protein sequence ID" value="ENSMUSP00000123514.2"/>
    <property type="gene ID" value="ENSMUSG00000055865.9"/>
</dbReference>
<dbReference type="GeneID" id="329731"/>
<dbReference type="KEGG" id="mmu:329731"/>
<dbReference type="UCSC" id="uc008quj.2">
    <property type="organism name" value="mouse"/>
</dbReference>
<dbReference type="AGR" id="MGI:3046463"/>
<dbReference type="CTD" id="284467"/>
<dbReference type="MGI" id="MGI:3046463">
    <property type="gene designation" value="Tafa3"/>
</dbReference>
<dbReference type="VEuPathDB" id="HostDB:ENSMUSG00000055865"/>
<dbReference type="eggNOG" id="ENOG502S0M0">
    <property type="taxonomic scope" value="Eukaryota"/>
</dbReference>
<dbReference type="GeneTree" id="ENSGT00940000155644"/>
<dbReference type="HOGENOM" id="CLU_126078_1_0_1"/>
<dbReference type="InParanoid" id="Q7TPG6"/>
<dbReference type="OMA" id="RWWCHME"/>
<dbReference type="OrthoDB" id="9924724at2759"/>
<dbReference type="PhylomeDB" id="Q7TPG6"/>
<dbReference type="TreeFam" id="TF331749"/>
<dbReference type="BioGRID-ORCS" id="329731">
    <property type="hits" value="1 hit in 75 CRISPR screens"/>
</dbReference>
<dbReference type="ChiTaRS" id="Fam19a3">
    <property type="organism name" value="mouse"/>
</dbReference>
<dbReference type="PRO" id="PR:Q7TPG6"/>
<dbReference type="Proteomes" id="UP000000589">
    <property type="component" value="Chromosome 3"/>
</dbReference>
<dbReference type="RNAct" id="Q7TPG6">
    <property type="molecule type" value="protein"/>
</dbReference>
<dbReference type="Bgee" id="ENSMUSG00000055865">
    <property type="expression patterns" value="Expressed in lumbar dorsal root ganglion and 68 other cell types or tissues"/>
</dbReference>
<dbReference type="GO" id="GO:0005615">
    <property type="term" value="C:extracellular space"/>
    <property type="evidence" value="ECO:0000314"/>
    <property type="project" value="UniProtKB"/>
</dbReference>
<dbReference type="GO" id="GO:1903979">
    <property type="term" value="P:negative regulation of microglial cell activation"/>
    <property type="evidence" value="ECO:0000314"/>
    <property type="project" value="MGI"/>
</dbReference>
<dbReference type="GO" id="GO:1903980">
    <property type="term" value="P:positive regulation of microglial cell activation"/>
    <property type="evidence" value="ECO:0000314"/>
    <property type="project" value="MGI"/>
</dbReference>
<dbReference type="InterPro" id="IPR020350">
    <property type="entry name" value="Chemokine-like_TAFA"/>
</dbReference>
<dbReference type="InterPro" id="IPR051743">
    <property type="entry name" value="TAFA_chemokine-like"/>
</dbReference>
<dbReference type="PANTHER" id="PTHR31770">
    <property type="entry name" value="CHEMOKINE-LIKE PROTEIN TAFA FAMILY MEMBER"/>
    <property type="match status" value="1"/>
</dbReference>
<dbReference type="PANTHER" id="PTHR31770:SF3">
    <property type="entry name" value="CHEMOKINE-LIKE PROTEIN TAFA-3"/>
    <property type="match status" value="1"/>
</dbReference>
<dbReference type="Pfam" id="PF12020">
    <property type="entry name" value="TAFA"/>
    <property type="match status" value="1"/>
</dbReference>
<sequence length="132" mass="14426">MERPTSNWSAGSWVLALCLAWLWTCPASASLQPPTSAVLVKQGTCEVIAAHRCCNRNRIEERSQTVKCSCLSGQVAGTTRAKPSCVDASIVLQKWWCQMEPCLLGEECKVLPDLSGWSCSSGHKVKTTKVTR</sequence>
<comment type="function">
    <text evidence="3">Plays a role in the regulation of microglia polarization.</text>
</comment>
<comment type="subcellular location">
    <subcellularLocation>
        <location evidence="2 3">Secreted</location>
    </subcellularLocation>
</comment>
<comment type="tissue specificity">
    <text evidence="2 3">Highly expressed in brain, in regions such as the hippocampus, the habenular, thalamic nuclei and hypophysial pars tuberalis (PubMed:25595455). Expression levels in the hypophysial pars tuberalis vary between day and night: they are low at mid-day and high at mid-night. The expression in the other regions do not display a day/night difference (PubMed:22426341).</text>
</comment>
<comment type="induction">
    <text evidence="3">By ischemia. Up-regulated in the microglia in the middle cerebral artery occlusion (MCAO), expression reduced back to control level at 14 days after MCAO.</text>
</comment>
<comment type="similarity">
    <text evidence="4">Belongs to the TAFA family.</text>
</comment>
<proteinExistence type="evidence at transcript level"/>
<gene>
    <name type="primary">Tafa3</name>
    <name type="synonym">Fam19a3</name>
</gene>
<protein>
    <recommendedName>
        <fullName evidence="4">Chemokine-like protein TAFA-3</fullName>
    </recommendedName>
</protein>
<feature type="signal peptide" evidence="1">
    <location>
        <begin position="1"/>
        <end position="29"/>
    </location>
</feature>
<feature type="chain" id="PRO_0000042727" description="Chemokine-like protein TAFA-3">
    <location>
        <begin position="30"/>
        <end position="132"/>
    </location>
</feature>
<reference key="1">
    <citation type="journal article" date="2004" name="Genomics">
        <title>TAFA: a novel secreted family with conserved cysteine residues and restricted expression in the brain.</title>
        <authorList>
            <person name="Tom Tang Y."/>
            <person name="Emtage P."/>
            <person name="Funk W.D."/>
            <person name="Hu T."/>
            <person name="Arterburn M."/>
            <person name="Park E.E."/>
            <person name="Rupp F."/>
        </authorList>
    </citation>
    <scope>NUCLEOTIDE SEQUENCE [MRNA]</scope>
    <source>
        <strain>C57BL/6J</strain>
    </source>
</reference>
<reference key="2">
    <citation type="journal article" date="2004" name="Genome Res.">
        <title>The status, quality, and expansion of the NIH full-length cDNA project: the Mammalian Gene Collection (MGC).</title>
        <authorList>
            <consortium name="The MGC Project Team"/>
        </authorList>
    </citation>
    <scope>NUCLEOTIDE SEQUENCE [LARGE SCALE MRNA]</scope>
</reference>
<reference key="3">
    <citation type="journal article" date="2012" name="Gen. Comp. Endocrinol.">
        <title>Tafa-3 encoding for a secretory peptide is expressed in the mouse pars tuberalis and is affected by melatonin 1 receptor deficiency.</title>
        <authorList>
            <person name="Fischer C."/>
            <person name="Christ E."/>
            <person name="Korf H.W."/>
            <person name="von Gall C."/>
        </authorList>
    </citation>
    <scope>TISSUE SPECIFICITY</scope>
    <scope>SUBCELLULAR LOCATION</scope>
</reference>
<reference key="4">
    <citation type="journal article" date="2015" name="FEBS Lett.">
        <title>FAM19A3, a novel secreted protein, modulates the microglia/macrophage polarization dynamics and ameliorates cerebral ischemia.</title>
        <authorList>
            <person name="Shao Y."/>
            <person name="Deng T."/>
            <person name="Zhang T."/>
            <person name="Li P."/>
            <person name="Wang Y."/>
        </authorList>
    </citation>
    <scope>SUBCELLULAR LOCATION</scope>
    <scope>TISSUE SPECIFICITY</scope>
    <scope>INDUCTION</scope>
    <scope>FUNCTION</scope>
</reference>
<accession>Q7TPG6</accession>
<accession>Q147Z7</accession>
<evidence type="ECO:0000255" key="1"/>
<evidence type="ECO:0000269" key="2">
    <source>
    </source>
</evidence>
<evidence type="ECO:0000269" key="3">
    <source>
    </source>
</evidence>
<evidence type="ECO:0000305" key="4"/>
<name>TAFA3_MOUSE</name>